<comment type="function">
    <text evidence="2">Serine protease that shows proteolytic activity against a non-specific substrate beta-casein. Promotes or induces cell death either by direct binding to and inhibition of BIRC proteins (also called inhibitor of apoptosis proteins, IAPs), leading to an increase in caspase activity, or by a BIRC inhibition-independent, caspase-independent and serine protease activity-dependent mechanism. Can antagonize antiapoptotic activity of th/Diap1 by directly inducing the degradation of th/Diap1 (By similarity).</text>
</comment>
<comment type="catalytic activity">
    <reaction>
        <text>Cleavage of non-polar aliphatic amino-acids at the P1 position, with a preference for Val, Ile and Met. At the P2 and P3 positions, Arg is selected most strongly with a secondary preference for other hydrophilic residues.</text>
        <dbReference type="EC" id="3.4.21.108"/>
    </reaction>
</comment>
<comment type="subunit">
    <text evidence="2">Interacts with th/DIAP1 (via BIR 2 domain).</text>
</comment>
<comment type="subcellular location">
    <subcellularLocation>
        <location evidence="2">Mitochondrion intermembrane space</location>
        <topology evidence="3">Single-pass membrane protein</topology>
    </subcellularLocation>
    <subcellularLocation>
        <location evidence="2">Mitochondrion membrane</location>
        <topology evidence="3">Single-pass membrane protein</topology>
    </subcellularLocation>
    <text evidence="2">Predominantly present in the intermembrane space. Released into the cytosol following apoptotic stimuli, such as UV treatment. The extramitochondrial protein does not diffuse throughout the cytosol but stays near the mitochondria.</text>
</comment>
<comment type="similarity">
    <text evidence="3">Belongs to the peptidase S1C family.</text>
</comment>
<accession>Q297U2</accession>
<gene>
    <name evidence="2" type="primary">HtrA2</name>
    <name type="ORF">GA21097</name>
</gene>
<organism>
    <name type="scientific">Drosophila pseudoobscura pseudoobscura</name>
    <name type="common">Fruit fly</name>
    <dbReference type="NCBI Taxonomy" id="46245"/>
    <lineage>
        <taxon>Eukaryota</taxon>
        <taxon>Metazoa</taxon>
        <taxon>Ecdysozoa</taxon>
        <taxon>Arthropoda</taxon>
        <taxon>Hexapoda</taxon>
        <taxon>Insecta</taxon>
        <taxon>Pterygota</taxon>
        <taxon>Neoptera</taxon>
        <taxon>Endopterygota</taxon>
        <taxon>Diptera</taxon>
        <taxon>Brachycera</taxon>
        <taxon>Muscomorpha</taxon>
        <taxon>Ephydroidea</taxon>
        <taxon>Drosophilidae</taxon>
        <taxon>Drosophila</taxon>
        <taxon>Sophophora</taxon>
    </lineage>
</organism>
<protein>
    <recommendedName>
        <fullName evidence="2">Serine protease HTRA2, mitochondrial</fullName>
        <ecNumber>3.4.21.108</ecNumber>
    </recommendedName>
    <alternativeName>
        <fullName evidence="2">High temperature requirement protein A2</fullName>
    </alternativeName>
</protein>
<reference evidence="6" key="1">
    <citation type="journal article" date="2005" name="Genome Res.">
        <title>Comparative genome sequencing of Drosophila pseudoobscura: chromosomal, gene, and cis-element evolution.</title>
        <authorList>
            <person name="Richards S."/>
            <person name="Liu Y."/>
            <person name="Bettencourt B.R."/>
            <person name="Hradecky P."/>
            <person name="Letovsky S."/>
            <person name="Nielsen R."/>
            <person name="Thornton K."/>
            <person name="Hubisz M.J."/>
            <person name="Chen R."/>
            <person name="Meisel R.P."/>
            <person name="Couronne O."/>
            <person name="Hua S."/>
            <person name="Smith M.A."/>
            <person name="Zhang P."/>
            <person name="Liu J."/>
            <person name="Bussemaker H.J."/>
            <person name="van Batenburg M.F."/>
            <person name="Howells S.L."/>
            <person name="Scherer S.E."/>
            <person name="Sodergren E."/>
            <person name="Matthews B.B."/>
            <person name="Crosby M.A."/>
            <person name="Schroeder A.J."/>
            <person name="Ortiz-Barrientos D."/>
            <person name="Rives C.M."/>
            <person name="Metzker M.L."/>
            <person name="Muzny D.M."/>
            <person name="Scott G."/>
            <person name="Steffen D."/>
            <person name="Wheeler D.A."/>
            <person name="Worley K.C."/>
            <person name="Havlak P."/>
            <person name="Durbin K.J."/>
            <person name="Egan A."/>
            <person name="Gill R."/>
            <person name="Hume J."/>
            <person name="Morgan M.B."/>
            <person name="Miner G."/>
            <person name="Hamilton C."/>
            <person name="Huang Y."/>
            <person name="Waldron L."/>
            <person name="Verduzco D."/>
            <person name="Clerc-Blankenburg K.P."/>
            <person name="Dubchak I."/>
            <person name="Noor M.A.F."/>
            <person name="Anderson W."/>
            <person name="White K.P."/>
            <person name="Clark A.G."/>
            <person name="Schaeffer S.W."/>
            <person name="Gelbart W.M."/>
            <person name="Weinstock G.M."/>
            <person name="Gibbs R.A."/>
        </authorList>
    </citation>
    <scope>NUCLEOTIDE SEQUENCE [LARGE SCALE GENOMIC DNA]</scope>
    <source>
        <strain>MV2-25 / Tucson 14011-0121.94</strain>
    </source>
</reference>
<name>HTRA2_DROPS</name>
<keyword id="KW-0053">Apoptosis</keyword>
<keyword id="KW-0378">Hydrolase</keyword>
<keyword id="KW-0472">Membrane</keyword>
<keyword id="KW-0496">Mitochondrion</keyword>
<keyword id="KW-0645">Protease</keyword>
<keyword id="KW-1185">Reference proteome</keyword>
<keyword id="KW-0720">Serine protease</keyword>
<keyword id="KW-0809">Transit peptide</keyword>
<keyword id="KW-0812">Transmembrane</keyword>
<keyword id="KW-1133">Transmembrane helix</keyword>
<keyword id="KW-0865">Zymogen</keyword>
<dbReference type="EC" id="3.4.21.108"/>
<dbReference type="EMBL" id="CM000070">
    <property type="protein sequence ID" value="EAL28113.1"/>
    <property type="molecule type" value="Genomic_DNA"/>
</dbReference>
<dbReference type="RefSeq" id="XP_001358970.1">
    <property type="nucleotide sequence ID" value="XM_001358933.3"/>
</dbReference>
<dbReference type="SMR" id="Q297U2"/>
<dbReference type="FunCoup" id="Q297U2">
    <property type="interactions" value="1194"/>
</dbReference>
<dbReference type="STRING" id="46245.Q297U2"/>
<dbReference type="EnsemblMetazoa" id="FBtr0283441">
    <property type="protein sequence ID" value="FBpp0281879"/>
    <property type="gene ID" value="FBgn0081085"/>
</dbReference>
<dbReference type="GeneID" id="4801955"/>
<dbReference type="KEGG" id="dpo:4801955"/>
<dbReference type="CTD" id="27429"/>
<dbReference type="eggNOG" id="KOG1320">
    <property type="taxonomic scope" value="Eukaryota"/>
</dbReference>
<dbReference type="HOGENOM" id="CLU_020120_6_0_1"/>
<dbReference type="InParanoid" id="Q297U2"/>
<dbReference type="OMA" id="IMSPEGY"/>
<dbReference type="PhylomeDB" id="Q297U2"/>
<dbReference type="Proteomes" id="UP000001819">
    <property type="component" value="Chromosome 2"/>
</dbReference>
<dbReference type="Bgee" id="FBgn0081085">
    <property type="expression patterns" value="Expressed in male reproductive system and 3 other cell types or tissues"/>
</dbReference>
<dbReference type="GO" id="GO:0005758">
    <property type="term" value="C:mitochondrial intermembrane space"/>
    <property type="evidence" value="ECO:0007669"/>
    <property type="project" value="UniProtKB-SubCell"/>
</dbReference>
<dbReference type="GO" id="GO:0031966">
    <property type="term" value="C:mitochondrial membrane"/>
    <property type="evidence" value="ECO:0007669"/>
    <property type="project" value="UniProtKB-SubCell"/>
</dbReference>
<dbReference type="GO" id="GO:0004252">
    <property type="term" value="F:serine-type endopeptidase activity"/>
    <property type="evidence" value="ECO:0007669"/>
    <property type="project" value="InterPro"/>
</dbReference>
<dbReference type="GO" id="GO:0006915">
    <property type="term" value="P:apoptotic process"/>
    <property type="evidence" value="ECO:0007669"/>
    <property type="project" value="UniProtKB-KW"/>
</dbReference>
<dbReference type="GO" id="GO:0043065">
    <property type="term" value="P:positive regulation of apoptotic process"/>
    <property type="evidence" value="ECO:0007669"/>
    <property type="project" value="TreeGrafter"/>
</dbReference>
<dbReference type="GO" id="GO:0006508">
    <property type="term" value="P:proteolysis"/>
    <property type="evidence" value="ECO:0007669"/>
    <property type="project" value="UniProtKB-KW"/>
</dbReference>
<dbReference type="CDD" id="cd06785">
    <property type="entry name" value="cpPDZ_HtrA-like"/>
    <property type="match status" value="1"/>
</dbReference>
<dbReference type="FunFam" id="2.40.10.120:FF:000004">
    <property type="entry name" value="Serine protease HTRA2, mitochondrial"/>
    <property type="match status" value="1"/>
</dbReference>
<dbReference type="Gene3D" id="2.30.42.10">
    <property type="match status" value="1"/>
</dbReference>
<dbReference type="Gene3D" id="2.40.10.120">
    <property type="match status" value="1"/>
</dbReference>
<dbReference type="InterPro" id="IPR001478">
    <property type="entry name" value="PDZ"/>
</dbReference>
<dbReference type="InterPro" id="IPR041489">
    <property type="entry name" value="PDZ_6"/>
</dbReference>
<dbReference type="InterPro" id="IPR036034">
    <property type="entry name" value="PDZ_sf"/>
</dbReference>
<dbReference type="InterPro" id="IPR009003">
    <property type="entry name" value="Peptidase_S1_PA"/>
</dbReference>
<dbReference type="InterPro" id="IPR001940">
    <property type="entry name" value="Peptidase_S1C"/>
</dbReference>
<dbReference type="PANTHER" id="PTHR22939">
    <property type="entry name" value="SERINE PROTEASE FAMILY S1C HTRA-RELATED"/>
    <property type="match status" value="1"/>
</dbReference>
<dbReference type="PANTHER" id="PTHR22939:SF129">
    <property type="entry name" value="SERINE PROTEASE HTRA2, MITOCHONDRIAL"/>
    <property type="match status" value="1"/>
</dbReference>
<dbReference type="Pfam" id="PF17820">
    <property type="entry name" value="PDZ_6"/>
    <property type="match status" value="1"/>
</dbReference>
<dbReference type="Pfam" id="PF13365">
    <property type="entry name" value="Trypsin_2"/>
    <property type="match status" value="1"/>
</dbReference>
<dbReference type="PRINTS" id="PR00834">
    <property type="entry name" value="PROTEASES2C"/>
</dbReference>
<dbReference type="SMART" id="SM00228">
    <property type="entry name" value="PDZ"/>
    <property type="match status" value="1"/>
</dbReference>
<dbReference type="SUPFAM" id="SSF50156">
    <property type="entry name" value="PDZ domain-like"/>
    <property type="match status" value="1"/>
</dbReference>
<dbReference type="SUPFAM" id="SSF50494">
    <property type="entry name" value="Trypsin-like serine proteases"/>
    <property type="match status" value="1"/>
</dbReference>
<dbReference type="PROSITE" id="PS50106">
    <property type="entry name" value="PDZ"/>
    <property type="match status" value="1"/>
</dbReference>
<proteinExistence type="inferred from homology"/>
<sequence>MALRCINNLEIFLRRCTAPTLHRCCVASSRTAHTASSSKGSGGDNSKDKENNGQNKSGYRSFGWRSAFQFCVPFSLGALVSAVLIERHRDELTPTISARSLKGRRNEFNFIADVVAGCGDSVVYIEIKDTRHFDYFSGQPITASNGSGFVIEQNGLILTNAHVVINKPHTMVQVRLSDGRTFPATIEDVDQTSDLATLRIQVSGLPVMKLGKSSTLRSGEWVVALGSPLALSNTVTAGVISATQRASQELGLRNRDINYLQTDAAITFGNSGGPLVNLDGEAIGVNSMKVTAGISFAIPIDYVKVFLERAAERRKKGSAHKTGYPVKRYMGITMLTLTPDILFELKSRSQNMPNNLMHGVLVWKVIVGSPAHSGGLQPGDIVTHINKKEIKNSSDVYDALAEGRKDLEIVILRGVKQMHVKITPEDP</sequence>
<feature type="transit peptide" description="Mitochondrion" evidence="3">
    <location>
        <begin position="1"/>
        <end status="unknown"/>
    </location>
</feature>
<feature type="propeptide" id="PRO_0000382191" evidence="3">
    <location>
        <begin status="unknown"/>
        <end position="77"/>
    </location>
</feature>
<feature type="chain" id="PRO_0000382192" description="Serine protease HTRA2, mitochondrial" evidence="2">
    <location>
        <begin position="78"/>
        <end position="427"/>
    </location>
</feature>
<feature type="transmembrane region" description="Helical" evidence="3">
    <location>
        <begin position="66"/>
        <end position="86"/>
    </location>
</feature>
<feature type="domain" description="PDZ" evidence="4">
    <location>
        <begin position="330"/>
        <end position="415"/>
    </location>
</feature>
<feature type="region of interest" description="Disordered" evidence="5">
    <location>
        <begin position="33"/>
        <end position="55"/>
    </location>
</feature>
<feature type="region of interest" description="Serine protease" evidence="3">
    <location>
        <begin position="144"/>
        <end position="307"/>
    </location>
</feature>
<feature type="short sequence motif" description="IAP-binding" evidence="3">
    <location>
        <begin position="78"/>
        <end position="81"/>
    </location>
</feature>
<feature type="active site" description="Charge relay system" evidence="1">
    <location>
        <position position="162"/>
    </location>
</feature>
<feature type="active site" description="Charge relay system" evidence="1">
    <location>
        <position position="194"/>
    </location>
</feature>
<feature type="active site" description="Charge relay system" evidence="2">
    <location>
        <position position="271"/>
    </location>
</feature>
<evidence type="ECO:0000250" key="1">
    <source>
        <dbReference type="UniProtKB" id="O43464"/>
    </source>
</evidence>
<evidence type="ECO:0000250" key="2">
    <source>
        <dbReference type="UniProtKB" id="Q9VFJ3"/>
    </source>
</evidence>
<evidence type="ECO:0000255" key="3"/>
<evidence type="ECO:0000255" key="4">
    <source>
        <dbReference type="PROSITE-ProRule" id="PRU00143"/>
    </source>
</evidence>
<evidence type="ECO:0000256" key="5">
    <source>
        <dbReference type="SAM" id="MobiDB-lite"/>
    </source>
</evidence>
<evidence type="ECO:0000312" key="6">
    <source>
        <dbReference type="EMBL" id="EAL28113.1"/>
    </source>
</evidence>